<feature type="chain" id="PRO_1000076434" description="N-(5'-phosphoribosyl)anthranilate isomerase">
    <location>
        <begin position="1"/>
        <end position="222"/>
    </location>
</feature>
<gene>
    <name evidence="1" type="primary">trpF</name>
    <name type="ordered locus">BSUIS_A1951</name>
</gene>
<name>TRPF_BRUSI</name>
<evidence type="ECO:0000255" key="1">
    <source>
        <dbReference type="HAMAP-Rule" id="MF_00135"/>
    </source>
</evidence>
<sequence>MALDIKICGLKTPEAVAAALDGGATHIGFIFFPKSPRHITPDAAARLRAAATGRAVAVAVTVDADDEALDEIVKTVRPDMLQLHGGETPERVRFLKERYNLPVMKAFSIREAGDLEAIAPYRGIADRFLFDAKPPKGSELPGGNGISFDWNLLAALDADIDYMLSGGLNADNIAEALLKTGAPGIDISSGVECAPGEKDVRLIENFFQAVADANAQPFARRA</sequence>
<protein>
    <recommendedName>
        <fullName evidence="1">N-(5'-phosphoribosyl)anthranilate isomerase</fullName>
        <shortName evidence="1">PRAI</shortName>
        <ecNumber evidence="1">5.3.1.24</ecNumber>
    </recommendedName>
</protein>
<keyword id="KW-0028">Amino-acid biosynthesis</keyword>
<keyword id="KW-0057">Aromatic amino acid biosynthesis</keyword>
<keyword id="KW-0413">Isomerase</keyword>
<keyword id="KW-0822">Tryptophan biosynthesis</keyword>
<organism>
    <name type="scientific">Brucella suis (strain ATCC 23445 / NCTC 10510)</name>
    <dbReference type="NCBI Taxonomy" id="470137"/>
    <lineage>
        <taxon>Bacteria</taxon>
        <taxon>Pseudomonadati</taxon>
        <taxon>Pseudomonadota</taxon>
        <taxon>Alphaproteobacteria</taxon>
        <taxon>Hyphomicrobiales</taxon>
        <taxon>Brucellaceae</taxon>
        <taxon>Brucella/Ochrobactrum group</taxon>
        <taxon>Brucella</taxon>
    </lineage>
</organism>
<accession>B0CJK9</accession>
<proteinExistence type="inferred from homology"/>
<reference key="1">
    <citation type="submission" date="2007-12" db="EMBL/GenBank/DDBJ databases">
        <title>Brucella suis ATCC 23445 whole genome shotgun sequencing project.</title>
        <authorList>
            <person name="Setubal J.C."/>
            <person name="Bowns C."/>
            <person name="Boyle S."/>
            <person name="Crasta O.R."/>
            <person name="Czar M.J."/>
            <person name="Dharmanolla C."/>
            <person name="Gillespie J.J."/>
            <person name="Kenyon R.W."/>
            <person name="Lu J."/>
            <person name="Mane S."/>
            <person name="Mohapatra S."/>
            <person name="Nagrani S."/>
            <person name="Purkayastha A."/>
            <person name="Rajasimha H.K."/>
            <person name="Shallom J.M."/>
            <person name="Shallom S."/>
            <person name="Shukla M."/>
            <person name="Snyder E.E."/>
            <person name="Sobral B.W."/>
            <person name="Wattam A.R."/>
            <person name="Will R."/>
            <person name="Williams K."/>
            <person name="Yoo H."/>
            <person name="Bruce D."/>
            <person name="Detter C."/>
            <person name="Munk C."/>
            <person name="Brettin T.S."/>
        </authorList>
    </citation>
    <scope>NUCLEOTIDE SEQUENCE [LARGE SCALE GENOMIC DNA]</scope>
    <source>
        <strain>ATCC 23445 / NCTC 10510</strain>
    </source>
</reference>
<dbReference type="EC" id="5.3.1.24" evidence="1"/>
<dbReference type="EMBL" id="CP000911">
    <property type="protein sequence ID" value="ABY38961.1"/>
    <property type="molecule type" value="Genomic_DNA"/>
</dbReference>
<dbReference type="RefSeq" id="WP_002965175.1">
    <property type="nucleotide sequence ID" value="NC_010169.1"/>
</dbReference>
<dbReference type="SMR" id="B0CJK9"/>
<dbReference type="KEGG" id="bmt:BSUIS_A1951"/>
<dbReference type="HOGENOM" id="CLU_076364_1_1_5"/>
<dbReference type="UniPathway" id="UPA00035">
    <property type="reaction ID" value="UER00042"/>
</dbReference>
<dbReference type="Proteomes" id="UP000008545">
    <property type="component" value="Chromosome I"/>
</dbReference>
<dbReference type="GO" id="GO:0004640">
    <property type="term" value="F:phosphoribosylanthranilate isomerase activity"/>
    <property type="evidence" value="ECO:0007669"/>
    <property type="project" value="UniProtKB-UniRule"/>
</dbReference>
<dbReference type="GO" id="GO:0000162">
    <property type="term" value="P:L-tryptophan biosynthetic process"/>
    <property type="evidence" value="ECO:0007669"/>
    <property type="project" value="UniProtKB-UniRule"/>
</dbReference>
<dbReference type="CDD" id="cd00405">
    <property type="entry name" value="PRAI"/>
    <property type="match status" value="1"/>
</dbReference>
<dbReference type="Gene3D" id="3.20.20.70">
    <property type="entry name" value="Aldolase class I"/>
    <property type="match status" value="1"/>
</dbReference>
<dbReference type="HAMAP" id="MF_00135">
    <property type="entry name" value="PRAI"/>
    <property type="match status" value="1"/>
</dbReference>
<dbReference type="InterPro" id="IPR013785">
    <property type="entry name" value="Aldolase_TIM"/>
</dbReference>
<dbReference type="InterPro" id="IPR001240">
    <property type="entry name" value="PRAI_dom"/>
</dbReference>
<dbReference type="InterPro" id="IPR011060">
    <property type="entry name" value="RibuloseP-bd_barrel"/>
</dbReference>
<dbReference type="InterPro" id="IPR044643">
    <property type="entry name" value="TrpF_fam"/>
</dbReference>
<dbReference type="NCBIfam" id="NF002295">
    <property type="entry name" value="PRK01222.1-1"/>
    <property type="match status" value="1"/>
</dbReference>
<dbReference type="PANTHER" id="PTHR42894">
    <property type="entry name" value="N-(5'-PHOSPHORIBOSYL)ANTHRANILATE ISOMERASE"/>
    <property type="match status" value="1"/>
</dbReference>
<dbReference type="PANTHER" id="PTHR42894:SF1">
    <property type="entry name" value="N-(5'-PHOSPHORIBOSYL)ANTHRANILATE ISOMERASE"/>
    <property type="match status" value="1"/>
</dbReference>
<dbReference type="Pfam" id="PF00697">
    <property type="entry name" value="PRAI"/>
    <property type="match status" value="1"/>
</dbReference>
<dbReference type="SUPFAM" id="SSF51366">
    <property type="entry name" value="Ribulose-phoshate binding barrel"/>
    <property type="match status" value="1"/>
</dbReference>
<comment type="catalytic activity">
    <reaction evidence="1">
        <text>N-(5-phospho-beta-D-ribosyl)anthranilate = 1-(2-carboxyphenylamino)-1-deoxy-D-ribulose 5-phosphate</text>
        <dbReference type="Rhea" id="RHEA:21540"/>
        <dbReference type="ChEBI" id="CHEBI:18277"/>
        <dbReference type="ChEBI" id="CHEBI:58613"/>
        <dbReference type="EC" id="5.3.1.24"/>
    </reaction>
</comment>
<comment type="pathway">
    <text evidence="1">Amino-acid biosynthesis; L-tryptophan biosynthesis; L-tryptophan from chorismate: step 3/5.</text>
</comment>
<comment type="similarity">
    <text evidence="1">Belongs to the TrpF family.</text>
</comment>